<name>SURF4_CAEEL</name>
<comment type="function">
    <text evidence="3">Endoplasmic reticulum cargo receptor that mediates the export of the yolk proteins from intestinal cells by recruiting cargos into COPII vesicles to facilitate their secretion (PubMed:29643117). Required for the endoplasmic reticulum export of the yolk protein vit-2, which is synthesized as a lipoprotein complex, from intestinal cells (PubMed:29643117). Involved in endoplasmic reticulum exit sites (ERES) organization (PubMed:29643117).</text>
</comment>
<comment type="subcellular location">
    <subcellularLocation>
        <location evidence="3">Endoplasmic reticulum membrane</location>
        <topology evidence="2">Multi-pass membrane protein</topology>
    </subcellularLocation>
    <text evidence="3">Predominantly localizes at endoplasmic reticulum exit sites (ERES).</text>
</comment>
<comment type="domain">
    <text evidence="1">The di-lysine motif confers endoplasmic reticulum localization for type I membrane proteins.</text>
</comment>
<comment type="disruption phenotype">
    <text evidence="3">High rate of embryonic and larval lethality (PubMed:29643117). Some mutants reach adulthood but display severe accumulation of vit-2 in large granule-like structures in intestinal cells (PubMed:29643117).</text>
</comment>
<comment type="similarity">
    <text evidence="6">Belongs to the SURF4 family.</text>
</comment>
<evidence type="ECO:0000250" key="1">
    <source>
        <dbReference type="UniProtKB" id="O15260"/>
    </source>
</evidence>
<evidence type="ECO:0000255" key="2"/>
<evidence type="ECO:0000269" key="3">
    <source>
    </source>
</evidence>
<evidence type="ECO:0000303" key="4">
    <source>
    </source>
</evidence>
<evidence type="ECO:0000303" key="5">
    <source>
    </source>
</evidence>
<evidence type="ECO:0000305" key="6"/>
<feature type="chain" id="PRO_0000127668" description="Surfeit locus protein 4 homolog">
    <location>
        <begin position="1"/>
        <end position="277"/>
    </location>
</feature>
<feature type="transmembrane region" description="Helical" evidence="2">
    <location>
        <begin position="71"/>
        <end position="91"/>
    </location>
</feature>
<feature type="transmembrane region" description="Helical" evidence="2">
    <location>
        <begin position="97"/>
        <end position="117"/>
    </location>
</feature>
<feature type="transmembrane region" description="Helical" evidence="2">
    <location>
        <begin position="118"/>
        <end position="138"/>
    </location>
</feature>
<feature type="transmembrane region" description="Helical" evidence="2">
    <location>
        <begin position="163"/>
        <end position="183"/>
    </location>
</feature>
<feature type="transmembrane region" description="Helical" evidence="2">
    <location>
        <begin position="187"/>
        <end position="207"/>
    </location>
</feature>
<feature type="transmembrane region" description="Helical" evidence="2">
    <location>
        <begin position="213"/>
        <end position="233"/>
    </location>
</feature>
<feature type="transmembrane region" description="Helical" evidence="2">
    <location>
        <begin position="250"/>
        <end position="270"/>
    </location>
</feature>
<feature type="short sequence motif" description="Di-lysine motif" evidence="2">
    <location>
        <begin position="274"/>
        <end position="277"/>
    </location>
</feature>
<feature type="sequence conflict" description="In Ref. 1; CAA75173." evidence="6" ref="1">
    <original>A</original>
    <variation>R</variation>
    <location>
        <position position="17"/>
    </location>
</feature>
<gene>
    <name evidence="4" type="primary">sft-4</name>
    <name evidence="5" type="synonym">surf-4</name>
    <name type="ORF">C54H2.5</name>
</gene>
<dbReference type="EMBL" id="Y14949">
    <property type="protein sequence ID" value="CAA75173.1"/>
    <property type="molecule type" value="mRNA"/>
</dbReference>
<dbReference type="EMBL" id="FO080839">
    <property type="protein sequence ID" value="CCD67143.1"/>
    <property type="molecule type" value="Genomic_DNA"/>
</dbReference>
<dbReference type="PIR" id="T29611">
    <property type="entry name" value="T29611"/>
</dbReference>
<dbReference type="RefSeq" id="NP_508970.1">
    <property type="nucleotide sequence ID" value="NM_076569.12"/>
</dbReference>
<dbReference type="BioGRID" id="45776">
    <property type="interactions" value="7"/>
</dbReference>
<dbReference type="FunCoup" id="Q18864">
    <property type="interactions" value="2819"/>
</dbReference>
<dbReference type="STRING" id="6239.C54H2.5.1"/>
<dbReference type="PaxDb" id="6239-C54H2.5.1"/>
<dbReference type="PeptideAtlas" id="Q18864"/>
<dbReference type="EnsemblMetazoa" id="C54H2.5.1">
    <property type="protein sequence ID" value="C54H2.5.1"/>
    <property type="gene ID" value="WBGene00004788"/>
</dbReference>
<dbReference type="GeneID" id="180843"/>
<dbReference type="KEGG" id="cel:CELE_C54H2.5"/>
<dbReference type="UCSC" id="C54H2.5.1">
    <property type="organism name" value="c. elegans"/>
</dbReference>
<dbReference type="AGR" id="WB:WBGene00004788"/>
<dbReference type="CTD" id="180843"/>
<dbReference type="WormBase" id="C54H2.5">
    <property type="protein sequence ID" value="CE06987"/>
    <property type="gene ID" value="WBGene00004788"/>
    <property type="gene designation" value="sft-4"/>
</dbReference>
<dbReference type="eggNOG" id="KOG3998">
    <property type="taxonomic scope" value="Eukaryota"/>
</dbReference>
<dbReference type="GeneTree" id="ENSGT00530000064123"/>
<dbReference type="HOGENOM" id="CLU_056195_0_0_1"/>
<dbReference type="InParanoid" id="Q18864"/>
<dbReference type="OMA" id="RHRHFPW"/>
<dbReference type="OrthoDB" id="7859621at2759"/>
<dbReference type="PhylomeDB" id="Q18864"/>
<dbReference type="Reactome" id="R-CEL-6798695">
    <property type="pathway name" value="Neutrophil degranulation"/>
</dbReference>
<dbReference type="Reactome" id="R-CEL-6811434">
    <property type="pathway name" value="COPI-dependent Golgi-to-ER retrograde traffic"/>
</dbReference>
<dbReference type="PRO" id="PR:Q18864"/>
<dbReference type="Proteomes" id="UP000001940">
    <property type="component" value="Chromosome X"/>
</dbReference>
<dbReference type="Bgee" id="WBGene00004788">
    <property type="expression patterns" value="Expressed in pharyngeal muscle cell (C elegans) and 4 other cell types or tissues"/>
</dbReference>
<dbReference type="GO" id="GO:0005783">
    <property type="term" value="C:endoplasmic reticulum"/>
    <property type="evidence" value="ECO:0000318"/>
    <property type="project" value="GO_Central"/>
</dbReference>
<dbReference type="GO" id="GO:0070971">
    <property type="term" value="C:endoplasmic reticulum exit site"/>
    <property type="evidence" value="ECO:0000314"/>
    <property type="project" value="UniProtKB"/>
</dbReference>
<dbReference type="GO" id="GO:0005789">
    <property type="term" value="C:endoplasmic reticulum membrane"/>
    <property type="evidence" value="ECO:0007669"/>
    <property type="project" value="UniProtKB-SubCell"/>
</dbReference>
<dbReference type="GO" id="GO:0005793">
    <property type="term" value="C:endoplasmic reticulum-Golgi intermediate compartment"/>
    <property type="evidence" value="ECO:0000250"/>
    <property type="project" value="WormBase"/>
</dbReference>
<dbReference type="GO" id="GO:0048471">
    <property type="term" value="C:perinuclear region of cytoplasm"/>
    <property type="evidence" value="ECO:0000314"/>
    <property type="project" value="WormBase"/>
</dbReference>
<dbReference type="GO" id="GO:0038024">
    <property type="term" value="F:cargo receptor activity"/>
    <property type="evidence" value="ECO:0000314"/>
    <property type="project" value="UniProtKB"/>
</dbReference>
<dbReference type="GO" id="GO:0007030">
    <property type="term" value="P:Golgi organization"/>
    <property type="evidence" value="ECO:0000318"/>
    <property type="project" value="GO_Central"/>
</dbReference>
<dbReference type="GO" id="GO:0042059">
    <property type="term" value="P:negative regulation of epidermal growth factor receptor signaling pathway"/>
    <property type="evidence" value="ECO:0000316"/>
    <property type="project" value="WormBase"/>
</dbReference>
<dbReference type="GO" id="GO:0040027">
    <property type="term" value="P:negative regulation of vulval development"/>
    <property type="evidence" value="ECO:0000316"/>
    <property type="project" value="WormBase"/>
</dbReference>
<dbReference type="GO" id="GO:0002119">
    <property type="term" value="P:nematode larval development"/>
    <property type="evidence" value="ECO:0000315"/>
    <property type="project" value="WormBase"/>
</dbReference>
<dbReference type="GO" id="GO:0045732">
    <property type="term" value="P:positive regulation of protein catabolic process"/>
    <property type="evidence" value="ECO:0000315"/>
    <property type="project" value="WormBase"/>
</dbReference>
<dbReference type="GO" id="GO:0032527">
    <property type="term" value="P:protein exit from endoplasmic reticulum"/>
    <property type="evidence" value="ECO:0000314"/>
    <property type="project" value="UniProtKB"/>
</dbReference>
<dbReference type="InterPro" id="IPR045214">
    <property type="entry name" value="Surf1/Surf4"/>
</dbReference>
<dbReference type="InterPro" id="IPR002995">
    <property type="entry name" value="Surf4"/>
</dbReference>
<dbReference type="PANTHER" id="PTHR23427">
    <property type="entry name" value="SURFEIT LOCUS PROTEIN"/>
    <property type="match status" value="1"/>
</dbReference>
<dbReference type="PANTHER" id="PTHR23427:SF1">
    <property type="entry name" value="SURFEIT LOCUS PROTEIN 4"/>
    <property type="match status" value="1"/>
</dbReference>
<dbReference type="Pfam" id="PF02077">
    <property type="entry name" value="SURF4"/>
    <property type="match status" value="1"/>
</dbReference>
<dbReference type="PROSITE" id="PS01339">
    <property type="entry name" value="SURF4"/>
    <property type="match status" value="1"/>
</dbReference>
<reference key="1">
    <citation type="journal article" date="1996" name="Mol. Cell. Biol.">
        <title>Surfeit locus gene homologs are widely distributed in invertebrate genomes.</title>
        <authorList>
            <person name="Armes N."/>
            <person name="Fried M."/>
        </authorList>
    </citation>
    <scope>NUCLEOTIDE SEQUENCE [MRNA]</scope>
</reference>
<reference key="2">
    <citation type="journal article" date="1998" name="Science">
        <title>Genome sequence of the nematode C. elegans: a platform for investigating biology.</title>
        <authorList>
            <consortium name="The C. elegans sequencing consortium"/>
        </authorList>
    </citation>
    <scope>NUCLEOTIDE SEQUENCE [LARGE SCALE GENOMIC DNA]</scope>
    <source>
        <strain>Bristol N2</strain>
    </source>
</reference>
<reference key="3">
    <citation type="journal article" date="2018" name="J. Cell Biol.">
        <title>SFT-4/Surf4 control ER export of soluble cargo proteins and participate in ER exit site organization.</title>
        <authorList>
            <person name="Saegusa K."/>
            <person name="Sato M."/>
            <person name="Morooka N."/>
            <person name="Hara T."/>
            <person name="Sato K."/>
        </authorList>
    </citation>
    <scope>FUNCTION</scope>
    <scope>SUBCELLULAR LOCATION</scope>
    <scope>DISRUPTION PHENOTYPE</scope>
</reference>
<accession>Q18864</accession>
<accession>O18006</accession>
<organism>
    <name type="scientific">Caenorhabditis elegans</name>
    <dbReference type="NCBI Taxonomy" id="6239"/>
    <lineage>
        <taxon>Eukaryota</taxon>
        <taxon>Metazoa</taxon>
        <taxon>Ecdysozoa</taxon>
        <taxon>Nematoda</taxon>
        <taxon>Chromadorea</taxon>
        <taxon>Rhabditida</taxon>
        <taxon>Rhabditina</taxon>
        <taxon>Rhabditomorpha</taxon>
        <taxon>Rhabditoidea</taxon>
        <taxon>Rhabditidae</taxon>
        <taxon>Peloderinae</taxon>
        <taxon>Caenorhabditis</taxon>
    </lineage>
</organism>
<protein>
    <recommendedName>
        <fullName evidence="6">Surfeit locus protein 4 homolog</fullName>
    </recommendedName>
</protein>
<sequence>MNQFRAPGGQNEMLAKAEDAAEDFFRKTRTYLPHIARLCLVSTFLEDGIRMYFQWDDQKQFMQESWSCGWFIATLFVIYNFFGQFIPVLMIMLRKKVLVACGILASIVILQTIAYHILWDLKFLARNIAVGGGLLLLLAETQEEKASLFAGVPTMGDSNKPKSYMLLAGRVLLIFMFMSLMHFEMSFMQVLEIVVGFALITLVSIGYKTKLSAIVLVIWLFGLNLWLNAWWTIPSDRFYRDFMKYDFFQTMSVIGGLLLVIAYGPGGVSVDDYKKRW</sequence>
<proteinExistence type="evidence at transcript level"/>
<keyword id="KW-0256">Endoplasmic reticulum</keyword>
<keyword id="KW-0472">Membrane</keyword>
<keyword id="KW-0653">Protein transport</keyword>
<keyword id="KW-1185">Reference proteome</keyword>
<keyword id="KW-0812">Transmembrane</keyword>
<keyword id="KW-1133">Transmembrane helix</keyword>
<keyword id="KW-0813">Transport</keyword>